<evidence type="ECO:0000305" key="1"/>
<evidence type="ECO:0000312" key="2">
    <source>
        <dbReference type="EMBL" id="BAN38918.1"/>
    </source>
</evidence>
<evidence type="ECO:0000312" key="3">
    <source>
        <dbReference type="EMBL" id="EAL48235.1"/>
    </source>
</evidence>
<keyword id="KW-1185">Reference proteome</keyword>
<sequence length="238" mass="27566">MTSREDLVYLSKLAEQSERYEEMVQYMKQVAEMGTELSVEERNLISVAYKNVVGSRRASWRIISSLEQKEQAKGNTQRVELIKTYRAKIEQELSQKCDDVLKIITEFLLKNSTSIESKVFFKKMEGDYYRYYAEFTVDEKRKEVADKSLAAYQEATDTAASLVPTHPIRLGLALNFSVFYYEIMNDADKACQLAKEAFDEAIQKLDEVPEESYKDSTLIMQLLRDNLTLWTSDMGDDE</sequence>
<accession>P42649</accession>
<accession>A0A175JIW7</accession>
<accession>C4LXB1</accession>
<accession>S0AVD0</accession>
<protein>
    <recommendedName>
        <fullName evidence="1">14-3-3 protein 2</fullName>
        <shortName evidence="1">14-3-3-2</shortName>
        <shortName evidence="1">EhP2</shortName>
    </recommendedName>
</protein>
<gene>
    <name evidence="3" type="ORF">EHI_098280</name>
</gene>
<reference evidence="2" key="1">
    <citation type="submission" date="2012-06" db="EMBL/GenBank/DDBJ databases">
        <title>Short 5' UTR of Entamoeba genes.</title>
        <authorList>
            <person name="Hiranuka K."/>
            <person name="Kumagai M."/>
            <person name="Wakaguri H."/>
            <person name="Suzuki Y."/>
            <person name="Sugano S."/>
            <person name="Watanabe J."/>
            <person name="Makioka A."/>
        </authorList>
    </citation>
    <scope>NUCLEOTIDE SEQUENCE [MRNA]</scope>
    <source>
        <strain evidence="2">ATCC 30459 / HM-1:IMSS / ABRM</strain>
    </source>
</reference>
<reference key="2">
    <citation type="submission" date="1994-08" db="EMBL/GenBank/DDBJ databases">
        <authorList>
            <person name="Samuelson J."/>
            <person name="Shen P."/>
            <person name="Meckler G."/>
            <person name="Descoteaux S."/>
            <person name="Fu H."/>
            <person name="Lohia A."/>
        </authorList>
    </citation>
    <scope>NUCLEOTIDE SEQUENCE [GENOMIC DNA]</scope>
    <source>
        <strain>ATCC 30459 / HM-1:IMSS / ABRM</strain>
    </source>
</reference>
<reference evidence="3" key="3">
    <citation type="journal article" date="2005" name="Nature">
        <title>The genome of the protist parasite Entamoeba histolytica.</title>
        <authorList>
            <person name="Loftus B.J."/>
            <person name="Anderson I."/>
            <person name="Davies R."/>
            <person name="Alsmark U.C."/>
            <person name="Samuelson J."/>
            <person name="Amedeo P."/>
            <person name="Roncaglia P."/>
            <person name="Berriman M."/>
            <person name="Hirt R.P."/>
            <person name="Mann B.J."/>
            <person name="Nozaki T."/>
            <person name="Suh B."/>
            <person name="Pop M."/>
            <person name="Duchene M."/>
            <person name="Ackers J."/>
            <person name="Tannich E."/>
            <person name="Leippe M."/>
            <person name="Hofer M."/>
            <person name="Bruchhaus I."/>
            <person name="Willhoeft U."/>
            <person name="Bhattacharya A."/>
            <person name="Chillingworth T."/>
            <person name="Churcher C.M."/>
            <person name="Hance Z."/>
            <person name="Harris B."/>
            <person name="Harris D."/>
            <person name="Jagels K."/>
            <person name="Moule S."/>
            <person name="Mungall K.L."/>
            <person name="Ormond D."/>
            <person name="Squares R."/>
            <person name="Whitehead S."/>
            <person name="Quail M.A."/>
            <person name="Rabbinowitsch E."/>
            <person name="Norbertczak H."/>
            <person name="Price C."/>
            <person name="Wang Z."/>
            <person name="Guillen N."/>
            <person name="Gilchrist C."/>
            <person name="Stroup S.E."/>
            <person name="Bhattacharya S."/>
            <person name="Lohia A."/>
            <person name="Foster P.G."/>
            <person name="Sicheritz-Ponten T."/>
            <person name="Weber C."/>
            <person name="Singh U."/>
            <person name="Mukherjee C."/>
            <person name="El-Sayed N.M.A."/>
            <person name="Petri W.A."/>
            <person name="Clark C.G."/>
            <person name="Embley T.M."/>
            <person name="Barrell B.G."/>
            <person name="Fraser C.M."/>
            <person name="Hall N."/>
        </authorList>
    </citation>
    <scope>NUCLEOTIDE SEQUENCE [LARGE SCALE GENOMIC DNA]</scope>
    <source>
        <strain evidence="3">ATCC 30459 / HM-1:IMSS / ABRM</strain>
    </source>
</reference>
<feature type="chain" id="PRO_0000058658" description="14-3-3 protein 2">
    <location>
        <begin position="1"/>
        <end position="238"/>
    </location>
</feature>
<feature type="sequence conflict" description="In Ref. 2; AAA80186." evidence="1" ref="2">
    <original>E</original>
    <variation>Q</variation>
    <location>
        <position position="182"/>
    </location>
</feature>
<feature type="sequence conflict" description="In Ref. 2; AAA80186." evidence="1" ref="2">
    <original>D</original>
    <variation>E</variation>
    <location>
        <position position="215"/>
    </location>
</feature>
<dbReference type="EMBL" id="AK419193">
    <property type="protein sequence ID" value="BAN37896.1"/>
    <property type="molecule type" value="mRNA"/>
</dbReference>
<dbReference type="EMBL" id="AK420303">
    <property type="protein sequence ID" value="BAN38918.1"/>
    <property type="molecule type" value="mRNA"/>
</dbReference>
<dbReference type="EMBL" id="U13419">
    <property type="protein sequence ID" value="AAA80186.1"/>
    <property type="molecule type" value="Genomic_DNA"/>
</dbReference>
<dbReference type="EMBL" id="DS571169">
    <property type="protein sequence ID" value="EAL48235.1"/>
    <property type="molecule type" value="Genomic_DNA"/>
</dbReference>
<dbReference type="RefSeq" id="XP_653621.1">
    <property type="nucleotide sequence ID" value="XM_648529.2"/>
</dbReference>
<dbReference type="SMR" id="P42649"/>
<dbReference type="STRING" id="5759.C4LXB1"/>
<dbReference type="EnsemblProtists" id="GAT93384">
    <property type="protein sequence ID" value="GAT93384"/>
    <property type="gene ID" value="CL6EHI_098280"/>
</dbReference>
<dbReference type="EnsemblProtists" id="rna_EHI_098280-1">
    <property type="protein sequence ID" value="rna_EHI_098280-1"/>
    <property type="gene ID" value="EHI_098280"/>
</dbReference>
<dbReference type="GeneID" id="3407926"/>
<dbReference type="KEGG" id="ehi:EHI_098280"/>
<dbReference type="VEuPathDB" id="AmoebaDB:EHI5A_039080"/>
<dbReference type="VEuPathDB" id="AmoebaDB:EHI7A_020790"/>
<dbReference type="VEuPathDB" id="AmoebaDB:EHI8A_017030"/>
<dbReference type="VEuPathDB" id="AmoebaDB:EHI_098280"/>
<dbReference type="VEuPathDB" id="AmoebaDB:KM1_047610"/>
<dbReference type="eggNOG" id="KOG0841">
    <property type="taxonomic scope" value="Eukaryota"/>
</dbReference>
<dbReference type="HOGENOM" id="CLU_058290_0_0_1"/>
<dbReference type="OMA" id="YDEMVNE"/>
<dbReference type="OrthoDB" id="10260625at2759"/>
<dbReference type="Proteomes" id="UP000001926">
    <property type="component" value="Partially assembled WGS sequence"/>
</dbReference>
<dbReference type="GO" id="GO:0005737">
    <property type="term" value="C:cytoplasm"/>
    <property type="evidence" value="ECO:0000318"/>
    <property type="project" value="GO_Central"/>
</dbReference>
<dbReference type="GO" id="GO:0008104">
    <property type="term" value="P:protein localization"/>
    <property type="evidence" value="ECO:0000318"/>
    <property type="project" value="GO_Central"/>
</dbReference>
<dbReference type="GO" id="GO:0007165">
    <property type="term" value="P:signal transduction"/>
    <property type="evidence" value="ECO:0000318"/>
    <property type="project" value="GO_Central"/>
</dbReference>
<dbReference type="CDD" id="cd08774">
    <property type="entry name" value="14-3-3"/>
    <property type="match status" value="1"/>
</dbReference>
<dbReference type="FunFam" id="1.20.190.20:FF:000001">
    <property type="entry name" value="14-3-3 gamma 1"/>
    <property type="match status" value="1"/>
</dbReference>
<dbReference type="Gene3D" id="1.20.190.20">
    <property type="entry name" value="14-3-3 domain"/>
    <property type="match status" value="1"/>
</dbReference>
<dbReference type="InterPro" id="IPR000308">
    <property type="entry name" value="14-3-3"/>
</dbReference>
<dbReference type="InterPro" id="IPR023409">
    <property type="entry name" value="14-3-3_CS"/>
</dbReference>
<dbReference type="InterPro" id="IPR036815">
    <property type="entry name" value="14-3-3_dom_sf"/>
</dbReference>
<dbReference type="InterPro" id="IPR023410">
    <property type="entry name" value="14-3-3_domain"/>
</dbReference>
<dbReference type="PANTHER" id="PTHR18860">
    <property type="entry name" value="14-3-3 PROTEIN"/>
    <property type="match status" value="1"/>
</dbReference>
<dbReference type="Pfam" id="PF00244">
    <property type="entry name" value="14-3-3"/>
    <property type="match status" value="1"/>
</dbReference>
<dbReference type="PIRSF" id="PIRSF000868">
    <property type="entry name" value="14-3-3"/>
    <property type="match status" value="1"/>
</dbReference>
<dbReference type="PRINTS" id="PR00305">
    <property type="entry name" value="1433ZETA"/>
</dbReference>
<dbReference type="SMART" id="SM00101">
    <property type="entry name" value="14_3_3"/>
    <property type="match status" value="1"/>
</dbReference>
<dbReference type="SUPFAM" id="SSF48445">
    <property type="entry name" value="14-3-3 protein"/>
    <property type="match status" value="1"/>
</dbReference>
<dbReference type="PROSITE" id="PS00796">
    <property type="entry name" value="1433_1"/>
    <property type="match status" value="1"/>
</dbReference>
<dbReference type="PROSITE" id="PS00797">
    <property type="entry name" value="1433_2"/>
    <property type="match status" value="1"/>
</dbReference>
<proteinExistence type="evidence at transcript level"/>
<name>14332_ENTH1</name>
<organism evidence="3">
    <name type="scientific">Entamoeba histolytica (strain ATCC 30459 / HM-1:IMSS / ABRM)</name>
    <dbReference type="NCBI Taxonomy" id="294381"/>
    <lineage>
        <taxon>Eukaryota</taxon>
        <taxon>Amoebozoa</taxon>
        <taxon>Evosea</taxon>
        <taxon>Archamoebae</taxon>
        <taxon>Mastigamoebida</taxon>
        <taxon>Entamoebidae</taxon>
        <taxon>Entamoeba</taxon>
    </lineage>
</organism>
<comment type="function">
    <text evidence="1">Probable adapter protein.</text>
</comment>
<comment type="similarity">
    <text evidence="1">Belongs to the 14-3-3 family.</text>
</comment>